<reference evidence="6" key="1">
    <citation type="journal article" date="1998" name="Science">
        <title>Genome sequence of the nematode C. elegans: a platform for investigating biology.</title>
        <authorList>
            <consortium name="The C. elegans sequencing consortium"/>
        </authorList>
    </citation>
    <scope>NUCLEOTIDE SEQUENCE [LARGE SCALE GENOMIC DNA]</scope>
    <source>
        <strain evidence="6">Bristol N2</strain>
    </source>
</reference>
<reference evidence="5" key="2">
    <citation type="journal article" date="2007" name="Mech. Dev.">
        <title>ASB-1, a germline-specific isoform of mitochondrial ATP synthase b subunit, is required to maintain the rate of germline development in Caenorhabditis elegans.</title>
        <authorList>
            <person name="Kawasaki I."/>
            <person name="Hanazawa M."/>
            <person name="Gengyo-Ando K."/>
            <person name="Mitani S."/>
            <person name="Maruyama I."/>
            <person name="Iino Y."/>
        </authorList>
    </citation>
    <scope>FUNCTION</scope>
    <scope>SUBCELLULAR LOCATION</scope>
    <scope>DEVELOPMENTAL STAGE</scope>
    <scope>DISRUPTION PHENOTYPE</scope>
</reference>
<protein>
    <recommendedName>
        <fullName evidence="5">ATP synthase F(0) complex subunit B1, mitochondrial</fullName>
    </recommendedName>
    <alternativeName>
        <fullName evidence="5">ATP synthase peripheral stalk-membrane subunit B1</fullName>
    </alternativeName>
    <alternativeName>
        <fullName evidence="5">ATP synthase proton-transporting mitochondrial F(0) complex subunit B1</fullName>
    </alternativeName>
    <alternativeName>
        <fullName evidence="5">ATP synthase subunit B1</fullName>
        <shortName evidence="5">ATPase subunit B1</shortName>
    </alternativeName>
</protein>
<sequence length="301" mass="34368">MSLSRLSSPQTFSRVFIVARGAATGHAVAPSSDNSIGYFEKIAYRFKGIPLPTETEAPKSMFDACNKEWSAPELLPSVPKDFKEHPDRDLTNYPYPSRPMYPPKTRLLMMPDSWFTAFQKVTGTSGPYLFFGGLFAFLVNKELWVFEEQGHMTVGWILFYLLVSRTAGYKIDAGLYKDYQERVGFFKGLIQEDLKEAVDFRKTSAAQTASFAALKEGMPTSLKDSMQLQLEAAYRKNVQTISNEIKRRIEYLKETEETKARFERDQLLKLINDSVEKQVSQKDFQEKFLQNAIQQLKGIAV</sequence>
<accession>Q20053</accession>
<comment type="function">
    <text evidence="3 5">Mitochondrial membrane ATP synthase (F(1)F(0) ATP synthase or Complex V) produces ATP from ADP in the presence of a proton gradient across the membrane which is generated by electron transport complexes of the respiratory chain. F-type ATPases consist of two structural domains, F(1) - containing the extramembraneous catalytic core, and F(0) - containing the membrane proton channel, linked together by a central stalk and a peripheral stalk. During catalysis, ATP synthesis in the catalytic domain of F(1) is coupled via a rotary mechanism of the central stalk subunits to proton translocation. Part of the complex F(0) domain and the peripheric stalk, which acts as a stator to hold the subunits of the catalytic subcomplexes relative to the rotary elements (Probable). Plays a role in germline development (PubMed:17223323).</text>
</comment>
<comment type="subunit">
    <text evidence="5">Subunit of the F-type ATPase which has 2 components, CF(1) - the catalytic core - and CF(0) - the membrane proton channel.</text>
</comment>
<comment type="subcellular location">
    <subcellularLocation>
        <location evidence="2 3">Mitochondrion</location>
    </subcellularLocation>
    <subcellularLocation>
        <location evidence="2">Mitochondrion inner membrane</location>
    </subcellularLocation>
</comment>
<comment type="developmental stage">
    <text evidence="3">Specifically expressed in the germline from the L1 larval stage.</text>
</comment>
<comment type="disruption phenotype">
    <text evidence="3">RNAi-mediated knockdown results in sterility (PubMed:17223323). RNAi-mediated knockdown does not affect the timing of hypodermal and vulval development (PubMed:17223323).</text>
</comment>
<comment type="similarity">
    <text evidence="2">Belongs to the eukaryotic ATPase B chain family.</text>
</comment>
<dbReference type="EMBL" id="BX284603">
    <property type="protein sequence ID" value="CAA86329.1"/>
    <property type="molecule type" value="Genomic_DNA"/>
</dbReference>
<dbReference type="PIR" id="T21803">
    <property type="entry name" value="T21803"/>
</dbReference>
<dbReference type="RefSeq" id="NP_497938.1">
    <property type="nucleotide sequence ID" value="NM_065537.7"/>
</dbReference>
<dbReference type="SMR" id="Q20053"/>
<dbReference type="FunCoup" id="Q20053">
    <property type="interactions" value="1116"/>
</dbReference>
<dbReference type="STRING" id="6239.F35G12.10.2"/>
<dbReference type="PaxDb" id="6239-F35G12.10.1"/>
<dbReference type="PeptideAtlas" id="Q20053"/>
<dbReference type="EnsemblMetazoa" id="F35G12.10.1">
    <property type="protein sequence ID" value="F35G12.10.1"/>
    <property type="gene ID" value="WBGene00000206"/>
</dbReference>
<dbReference type="GeneID" id="175605"/>
<dbReference type="KEGG" id="cel:CELE_F35G12.10"/>
<dbReference type="UCSC" id="F35G12.10.1">
    <property type="organism name" value="c. elegans"/>
</dbReference>
<dbReference type="AGR" id="WB:WBGene00000206"/>
<dbReference type="CTD" id="175605"/>
<dbReference type="WormBase" id="F35G12.10">
    <property type="protein sequence ID" value="CE00968"/>
    <property type="gene ID" value="WBGene00000206"/>
    <property type="gene designation" value="asb-1"/>
</dbReference>
<dbReference type="eggNOG" id="KOG3976">
    <property type="taxonomic scope" value="Eukaryota"/>
</dbReference>
<dbReference type="GeneTree" id="ENSGT00390000001958"/>
<dbReference type="HOGENOM" id="CLU_925122_0_0_1"/>
<dbReference type="InParanoid" id="Q20053"/>
<dbReference type="OMA" id="PEEWFTF"/>
<dbReference type="OrthoDB" id="67388at2759"/>
<dbReference type="PhylomeDB" id="Q20053"/>
<dbReference type="Reactome" id="R-CEL-163210">
    <property type="pathway name" value="Formation of ATP by chemiosmotic coupling"/>
</dbReference>
<dbReference type="Reactome" id="R-CEL-8949613">
    <property type="pathway name" value="Cristae formation"/>
</dbReference>
<dbReference type="PRO" id="PR:Q20053"/>
<dbReference type="Proteomes" id="UP000001940">
    <property type="component" value="Chromosome III"/>
</dbReference>
<dbReference type="Bgee" id="WBGene00000206">
    <property type="expression patterns" value="Expressed in germ line (C elegans) and 4 other cell types or tissues"/>
</dbReference>
<dbReference type="GO" id="GO:0005743">
    <property type="term" value="C:mitochondrial inner membrane"/>
    <property type="evidence" value="ECO:0007669"/>
    <property type="project" value="UniProtKB-SubCell"/>
</dbReference>
<dbReference type="GO" id="GO:0005739">
    <property type="term" value="C:mitochondrion"/>
    <property type="evidence" value="ECO:0000314"/>
    <property type="project" value="WormBase"/>
</dbReference>
<dbReference type="GO" id="GO:0097730">
    <property type="term" value="C:non-motile cilium"/>
    <property type="evidence" value="ECO:0000314"/>
    <property type="project" value="WormBase"/>
</dbReference>
<dbReference type="GO" id="GO:0045259">
    <property type="term" value="C:proton-transporting ATP synthase complex"/>
    <property type="evidence" value="ECO:0007669"/>
    <property type="project" value="UniProtKB-KW"/>
</dbReference>
<dbReference type="GO" id="GO:0015078">
    <property type="term" value="F:proton transmembrane transporter activity"/>
    <property type="evidence" value="ECO:0007669"/>
    <property type="project" value="InterPro"/>
</dbReference>
<dbReference type="GO" id="GO:0015986">
    <property type="term" value="P:proton motive force-driven ATP synthesis"/>
    <property type="evidence" value="ECO:0000318"/>
    <property type="project" value="GO_Central"/>
</dbReference>
<dbReference type="FunFam" id="1.20.5.2210:FF:000004">
    <property type="entry name" value="ATP Synthase B homolog"/>
    <property type="match status" value="1"/>
</dbReference>
<dbReference type="Gene3D" id="1.20.5.2210">
    <property type="match status" value="1"/>
</dbReference>
<dbReference type="InterPro" id="IPR008688">
    <property type="entry name" value="ATP_synth_Bsub_B/MI25"/>
</dbReference>
<dbReference type="InterPro" id="IPR013837">
    <property type="entry name" value="ATP_synth_F0_suB"/>
</dbReference>
<dbReference type="PANTHER" id="PTHR12733:SF3">
    <property type="entry name" value="ATP SYNTHASE F(0) COMPLEX SUBUNIT B1, MITOCHONDRIAL"/>
    <property type="match status" value="1"/>
</dbReference>
<dbReference type="PANTHER" id="PTHR12733">
    <property type="entry name" value="MITOCHONDRIAL ATP SYNTHASE B CHAIN"/>
    <property type="match status" value="1"/>
</dbReference>
<dbReference type="Pfam" id="PF05405">
    <property type="entry name" value="Mt_ATP-synt_B"/>
    <property type="match status" value="1"/>
</dbReference>
<dbReference type="SUPFAM" id="SSF161060">
    <property type="entry name" value="ATP synthase B chain-like"/>
    <property type="match status" value="1"/>
</dbReference>
<organism evidence="6">
    <name type="scientific">Caenorhabditis elegans</name>
    <dbReference type="NCBI Taxonomy" id="6239"/>
    <lineage>
        <taxon>Eukaryota</taxon>
        <taxon>Metazoa</taxon>
        <taxon>Ecdysozoa</taxon>
        <taxon>Nematoda</taxon>
        <taxon>Chromadorea</taxon>
        <taxon>Rhabditida</taxon>
        <taxon>Rhabditina</taxon>
        <taxon>Rhabditomorpha</taxon>
        <taxon>Rhabditoidea</taxon>
        <taxon>Rhabditidae</taxon>
        <taxon>Peloderinae</taxon>
        <taxon>Caenorhabditis</taxon>
    </lineage>
</organism>
<evidence type="ECO:0000255" key="1"/>
<evidence type="ECO:0000255" key="2">
    <source>
        <dbReference type="RuleBase" id="RU368017"/>
    </source>
</evidence>
<evidence type="ECO:0000269" key="3">
    <source>
    </source>
</evidence>
<evidence type="ECO:0000303" key="4">
    <source>
    </source>
</evidence>
<evidence type="ECO:0000305" key="5"/>
<evidence type="ECO:0000312" key="6">
    <source>
        <dbReference type="Proteomes" id="UP000001940"/>
    </source>
</evidence>
<evidence type="ECO:0000312" key="7">
    <source>
        <dbReference type="WormBase" id="F35G12.10"/>
    </source>
</evidence>
<feature type="transit peptide" description="Mitochondrion" evidence="1">
    <location>
        <begin position="1"/>
        <end position="21"/>
    </location>
</feature>
<feature type="chain" id="PRO_0000454588" description="ATP synthase F(0) complex subunit B1, mitochondrial">
    <location>
        <begin position="22"/>
        <end position="301"/>
    </location>
</feature>
<proteinExistence type="evidence at transcript level"/>
<gene>
    <name evidence="4 7" type="primary">asb-1</name>
    <name evidence="7" type="ORF">F35G12.10</name>
</gene>
<keyword id="KW-0138">CF(0)</keyword>
<keyword id="KW-0375">Hydrogen ion transport</keyword>
<keyword id="KW-0406">Ion transport</keyword>
<keyword id="KW-0472">Membrane</keyword>
<keyword id="KW-0496">Mitochondrion</keyword>
<keyword id="KW-0999">Mitochondrion inner membrane</keyword>
<keyword id="KW-1185">Reference proteome</keyword>
<keyword id="KW-0809">Transit peptide</keyword>
<keyword id="KW-0813">Transport</keyword>
<name>AT5F1_CAEEL</name>